<feature type="chain" id="PRO_0000195631" description="Tyrosine phenol-lyase">
    <location>
        <begin position="1"/>
        <end position="456"/>
    </location>
</feature>
<feature type="modified residue" description="N6-(pyridoxal phosphate)lysine">
    <location>
        <position position="257"/>
    </location>
</feature>
<feature type="sequence conflict" description="In Ref. 2; AAA23098." evidence="1" ref="2">
    <original>E</original>
    <variation>A</variation>
    <location>
        <position position="205"/>
    </location>
</feature>
<feature type="strand" evidence="4">
    <location>
        <begin position="7"/>
        <end position="15"/>
    </location>
</feature>
<feature type="helix" evidence="4">
    <location>
        <begin position="21"/>
        <end position="30"/>
    </location>
</feature>
<feature type="turn" evidence="4">
    <location>
        <begin position="31"/>
        <end position="33"/>
    </location>
</feature>
<feature type="helix" evidence="4">
    <location>
        <begin position="35"/>
        <end position="37"/>
    </location>
</feature>
<feature type="helix" evidence="4">
    <location>
        <begin position="40"/>
        <end position="42"/>
    </location>
</feature>
<feature type="strand" evidence="4">
    <location>
        <begin position="44"/>
        <end position="46"/>
    </location>
</feature>
<feature type="strand" evidence="4">
    <location>
        <begin position="50"/>
        <end position="52"/>
    </location>
</feature>
<feature type="helix" evidence="4">
    <location>
        <begin position="58"/>
        <end position="64"/>
    </location>
</feature>
<feature type="strand" evidence="4">
    <location>
        <begin position="71"/>
        <end position="73"/>
    </location>
</feature>
<feature type="helix" evidence="4">
    <location>
        <begin position="75"/>
        <end position="88"/>
    </location>
</feature>
<feature type="strand" evidence="4">
    <location>
        <begin position="91"/>
        <end position="98"/>
    </location>
</feature>
<feature type="helix" evidence="4">
    <location>
        <begin position="99"/>
        <end position="110"/>
    </location>
</feature>
<feature type="strand" evidence="4">
    <location>
        <begin position="116"/>
        <end position="121"/>
    </location>
</feature>
<feature type="helix" evidence="4">
    <location>
        <begin position="124"/>
        <end position="132"/>
    </location>
</feature>
<feature type="strand" evidence="4">
    <location>
        <begin position="136"/>
        <end position="139"/>
    </location>
</feature>
<feature type="helix" evidence="4">
    <location>
        <begin position="143"/>
        <end position="146"/>
    </location>
</feature>
<feature type="turn" evidence="4">
    <location>
        <begin position="153"/>
        <end position="156"/>
    </location>
</feature>
<feature type="helix" evidence="4">
    <location>
        <begin position="160"/>
        <end position="170"/>
    </location>
</feature>
<feature type="helix" evidence="4">
    <location>
        <begin position="172"/>
        <end position="174"/>
    </location>
</feature>
<feature type="strand" evidence="4">
    <location>
        <begin position="175"/>
        <end position="184"/>
    </location>
</feature>
<feature type="turn" evidence="4">
    <location>
        <begin position="185"/>
        <end position="188"/>
    </location>
</feature>
<feature type="helix" evidence="4">
    <location>
        <begin position="194"/>
        <end position="206"/>
    </location>
</feature>
<feature type="strand" evidence="4">
    <location>
        <begin position="211"/>
        <end position="214"/>
    </location>
</feature>
<feature type="helix" evidence="4">
    <location>
        <begin position="218"/>
        <end position="228"/>
    </location>
</feature>
<feature type="strand" evidence="2">
    <location>
        <begin position="233"/>
        <end position="235"/>
    </location>
</feature>
<feature type="helix" evidence="4">
    <location>
        <begin position="237"/>
        <end position="246"/>
    </location>
</feature>
<feature type="strand" evidence="4">
    <location>
        <begin position="249"/>
        <end position="254"/>
    </location>
</feature>
<feature type="turn" evidence="4">
    <location>
        <begin position="255"/>
        <end position="259"/>
    </location>
</feature>
<feature type="strand" evidence="4">
    <location>
        <begin position="265"/>
        <end position="270"/>
    </location>
</feature>
<feature type="helix" evidence="4">
    <location>
        <begin position="272"/>
        <end position="285"/>
    </location>
</feature>
<feature type="turn" evidence="4">
    <location>
        <begin position="289"/>
        <end position="293"/>
    </location>
</feature>
<feature type="helix" evidence="4">
    <location>
        <begin position="296"/>
        <end position="308"/>
    </location>
</feature>
<feature type="helix" evidence="4">
    <location>
        <begin position="312"/>
        <end position="331"/>
    </location>
</feature>
<feature type="strand" evidence="4">
    <location>
        <begin position="342"/>
        <end position="348"/>
    </location>
</feature>
<feature type="helix" evidence="4">
    <location>
        <begin position="349"/>
        <end position="352"/>
    </location>
</feature>
<feature type="turn" evidence="4">
    <location>
        <begin position="353"/>
        <end position="355"/>
    </location>
</feature>
<feature type="helix" evidence="4">
    <location>
        <begin position="358"/>
        <end position="360"/>
    </location>
</feature>
<feature type="helix" evidence="4">
    <location>
        <begin position="362"/>
        <end position="374"/>
    </location>
</feature>
<feature type="strand" evidence="4">
    <location>
        <begin position="375"/>
        <end position="377"/>
    </location>
</feature>
<feature type="strand" evidence="4">
    <location>
        <begin position="379"/>
        <end position="382"/>
    </location>
</feature>
<feature type="helix" evidence="4">
    <location>
        <begin position="383"/>
        <end position="386"/>
    </location>
</feature>
<feature type="turn" evidence="4">
    <location>
        <begin position="390"/>
        <end position="392"/>
    </location>
</feature>
<feature type="strand" evidence="4">
    <location>
        <begin position="402"/>
        <end position="406"/>
    </location>
</feature>
<feature type="turn" evidence="3">
    <location>
        <begin position="409"/>
        <end position="411"/>
    </location>
</feature>
<feature type="helix" evidence="4">
    <location>
        <begin position="414"/>
        <end position="428"/>
    </location>
</feature>
<feature type="helix" evidence="4">
    <location>
        <begin position="429"/>
        <end position="433"/>
    </location>
</feature>
<feature type="strand" evidence="4">
    <location>
        <begin position="437"/>
        <end position="441"/>
    </location>
</feature>
<feature type="strand" evidence="4">
    <location>
        <begin position="444"/>
        <end position="446"/>
    </location>
</feature>
<feature type="helix" evidence="4">
    <location>
        <begin position="447"/>
        <end position="449"/>
    </location>
</feature>
<feature type="strand" evidence="4">
    <location>
        <begin position="452"/>
        <end position="455"/>
    </location>
</feature>
<gene>
    <name type="primary">tpl</name>
</gene>
<evidence type="ECO:0000305" key="1"/>
<evidence type="ECO:0007829" key="2">
    <source>
        <dbReference type="PDB" id="6DXV"/>
    </source>
</evidence>
<evidence type="ECO:0007829" key="3">
    <source>
        <dbReference type="PDB" id="6MLS"/>
    </source>
</evidence>
<evidence type="ECO:0007829" key="4">
    <source>
        <dbReference type="PDB" id="7TCS"/>
    </source>
</evidence>
<dbReference type="EC" id="4.1.99.2"/>
<dbReference type="EMBL" id="X66978">
    <property type="protein sequence ID" value="CAA47388.1"/>
    <property type="molecule type" value="Genomic_DNA"/>
</dbReference>
<dbReference type="EMBL" id="L10821">
    <property type="protein sequence ID" value="AAA23098.1"/>
    <property type="molecule type" value="Genomic_DNA"/>
</dbReference>
<dbReference type="PIR" id="A49493">
    <property type="entry name" value="A49493"/>
</dbReference>
<dbReference type="RefSeq" id="WP_003837154.1">
    <property type="nucleotide sequence ID" value="NZ_VWTQ01000005.1"/>
</dbReference>
<dbReference type="PDB" id="1TPL">
    <property type="method" value="X-ray"/>
    <property type="resolution" value="2.30 A"/>
    <property type="chains" value="A/B=1-456"/>
</dbReference>
<dbReference type="PDB" id="2EZ1">
    <property type="method" value="X-ray"/>
    <property type="resolution" value="1.90 A"/>
    <property type="chains" value="A/B=1-456"/>
</dbReference>
<dbReference type="PDB" id="2EZ2">
    <property type="method" value="X-ray"/>
    <property type="resolution" value="1.85 A"/>
    <property type="chains" value="A/B=1-456"/>
</dbReference>
<dbReference type="PDB" id="2TPL">
    <property type="method" value="X-ray"/>
    <property type="resolution" value="2.50 A"/>
    <property type="chains" value="A/B=1-456"/>
</dbReference>
<dbReference type="PDB" id="2VLF">
    <property type="method" value="X-ray"/>
    <property type="resolution" value="1.89 A"/>
    <property type="chains" value="A/B=1-456"/>
</dbReference>
<dbReference type="PDB" id="2VLH">
    <property type="method" value="X-ray"/>
    <property type="resolution" value="1.95 A"/>
    <property type="chains" value="A/B=1-456"/>
</dbReference>
<dbReference type="PDB" id="2YCN">
    <property type="method" value="X-ray"/>
    <property type="resolution" value="2.04 A"/>
    <property type="chains" value="A/B=1-456"/>
</dbReference>
<dbReference type="PDB" id="2YCP">
    <property type="method" value="X-ray"/>
    <property type="resolution" value="2.00 A"/>
    <property type="chains" value="A/B/C/D=1-456"/>
</dbReference>
<dbReference type="PDB" id="2YCT">
    <property type="method" value="X-ray"/>
    <property type="resolution" value="2.25 A"/>
    <property type="chains" value="A/B=1-456"/>
</dbReference>
<dbReference type="PDB" id="2YHK">
    <property type="method" value="X-ray"/>
    <property type="resolution" value="1.91 A"/>
    <property type="chains" value="A/B=1-456"/>
</dbReference>
<dbReference type="PDB" id="6DUR">
    <property type="method" value="X-ray"/>
    <property type="resolution" value="1.80 A"/>
    <property type="chains" value="A/B=2-456"/>
</dbReference>
<dbReference type="PDB" id="6DVX">
    <property type="method" value="X-ray"/>
    <property type="resolution" value="2.27 A"/>
    <property type="chains" value="A/B=1-456"/>
</dbReference>
<dbReference type="PDB" id="6DXV">
    <property type="method" value="X-ray"/>
    <property type="resolution" value="2.20 A"/>
    <property type="chains" value="A/B=2-456"/>
</dbReference>
<dbReference type="PDB" id="6DYT">
    <property type="method" value="X-ray"/>
    <property type="resolution" value="2.05 A"/>
    <property type="chains" value="A/B=1-456"/>
</dbReference>
<dbReference type="PDB" id="6DZ5">
    <property type="method" value="X-ray"/>
    <property type="resolution" value="2.26 A"/>
    <property type="chains" value="A/B=1-456"/>
</dbReference>
<dbReference type="PDB" id="6ECG">
    <property type="method" value="X-ray"/>
    <property type="resolution" value="2.27 A"/>
    <property type="chains" value="A/B=2-456"/>
</dbReference>
<dbReference type="PDB" id="6MLS">
    <property type="method" value="X-ray"/>
    <property type="resolution" value="1.77 A"/>
    <property type="chains" value="A/B=1-456"/>
</dbReference>
<dbReference type="PDB" id="6MME">
    <property type="method" value="X-ray"/>
    <property type="resolution" value="1.90 A"/>
    <property type="chains" value="A/B=1-456"/>
</dbReference>
<dbReference type="PDB" id="6MO3">
    <property type="method" value="X-ray"/>
    <property type="resolution" value="1.79 A"/>
    <property type="chains" value="A/B=1-456"/>
</dbReference>
<dbReference type="PDB" id="6MPD">
    <property type="method" value="X-ray"/>
    <property type="resolution" value="1.79 A"/>
    <property type="chains" value="A/B=1-456"/>
</dbReference>
<dbReference type="PDB" id="6MQQ">
    <property type="method" value="X-ray"/>
    <property type="resolution" value="2.05 A"/>
    <property type="chains" value="A/B=2-456"/>
</dbReference>
<dbReference type="PDB" id="6NV8">
    <property type="method" value="X-ray"/>
    <property type="resolution" value="2.26 A"/>
    <property type="chains" value="A/B=1-456"/>
</dbReference>
<dbReference type="PDB" id="7TCS">
    <property type="method" value="X-ray"/>
    <property type="resolution" value="1.37 A"/>
    <property type="chains" value="A/B/C/D=1-456"/>
</dbReference>
<dbReference type="PDB" id="7TDL">
    <property type="method" value="X-ray"/>
    <property type="resolution" value="1.60 A"/>
    <property type="chains" value="A/B/C/D=1-456"/>
</dbReference>
<dbReference type="PDBsum" id="1TPL"/>
<dbReference type="PDBsum" id="2EZ1"/>
<dbReference type="PDBsum" id="2EZ2"/>
<dbReference type="PDBsum" id="2TPL"/>
<dbReference type="PDBsum" id="2VLF"/>
<dbReference type="PDBsum" id="2VLH"/>
<dbReference type="PDBsum" id="2YCN"/>
<dbReference type="PDBsum" id="2YCP"/>
<dbReference type="PDBsum" id="2YCT"/>
<dbReference type="PDBsum" id="2YHK"/>
<dbReference type="PDBsum" id="6DUR"/>
<dbReference type="PDBsum" id="6DVX"/>
<dbReference type="PDBsum" id="6DXV"/>
<dbReference type="PDBsum" id="6DYT"/>
<dbReference type="PDBsum" id="6DZ5"/>
<dbReference type="PDBsum" id="6ECG"/>
<dbReference type="PDBsum" id="6MLS"/>
<dbReference type="PDBsum" id="6MME"/>
<dbReference type="PDBsum" id="6MO3"/>
<dbReference type="PDBsum" id="6MPD"/>
<dbReference type="PDBsum" id="6MQQ"/>
<dbReference type="PDBsum" id="6NV8"/>
<dbReference type="PDBsum" id="7TCS"/>
<dbReference type="PDBsum" id="7TDL"/>
<dbReference type="SMR" id="P31013"/>
<dbReference type="STRING" id="1333848.CFNIH1_09255"/>
<dbReference type="DrugBank" id="DB03897">
    <property type="generic name" value="Phloretic acid"/>
</dbReference>
<dbReference type="BRENDA" id="4.1.99.2">
    <property type="organism ID" value="1398"/>
</dbReference>
<dbReference type="EvolutionaryTrace" id="P31013"/>
<dbReference type="GO" id="GO:0050371">
    <property type="term" value="F:tyrosine phenol-lyase activity"/>
    <property type="evidence" value="ECO:0000314"/>
    <property type="project" value="CACAO"/>
</dbReference>
<dbReference type="GO" id="GO:0006570">
    <property type="term" value="P:tyrosine metabolic process"/>
    <property type="evidence" value="ECO:0007669"/>
    <property type="project" value="InterPro"/>
</dbReference>
<dbReference type="CDD" id="cd00617">
    <property type="entry name" value="Tnase_like"/>
    <property type="match status" value="1"/>
</dbReference>
<dbReference type="FunFam" id="3.40.640.10:FF:000092">
    <property type="entry name" value="Tyrosine phenol-lyase"/>
    <property type="match status" value="1"/>
</dbReference>
<dbReference type="Gene3D" id="3.90.1150.10">
    <property type="entry name" value="Aspartate Aminotransferase, domain 1"/>
    <property type="match status" value="1"/>
</dbReference>
<dbReference type="Gene3D" id="3.40.640.10">
    <property type="entry name" value="Type I PLP-dependent aspartate aminotransferase-like (Major domain)"/>
    <property type="match status" value="1"/>
</dbReference>
<dbReference type="HAMAP" id="MF_00543">
    <property type="entry name" value="Tyr_phenol_lyase"/>
    <property type="match status" value="1"/>
</dbReference>
<dbReference type="InterPro" id="IPR001597">
    <property type="entry name" value="ArAA_b-elim_lyase/Thr_aldolase"/>
</dbReference>
<dbReference type="InterPro" id="IPR011166">
    <property type="entry name" value="Beta-eliminating_lyase"/>
</dbReference>
<dbReference type="InterPro" id="IPR015424">
    <property type="entry name" value="PyrdxlP-dep_Trfase"/>
</dbReference>
<dbReference type="InterPro" id="IPR015421">
    <property type="entry name" value="PyrdxlP-dep_Trfase_major"/>
</dbReference>
<dbReference type="InterPro" id="IPR015422">
    <property type="entry name" value="PyrdxlP-dep_Trfase_small"/>
</dbReference>
<dbReference type="InterPro" id="IPR018176">
    <property type="entry name" value="Tryptophanase_CS"/>
</dbReference>
<dbReference type="InterPro" id="IPR013441">
    <property type="entry name" value="Tyr_phenol_ly"/>
</dbReference>
<dbReference type="NCBIfam" id="NF009709">
    <property type="entry name" value="PRK13238.1"/>
    <property type="match status" value="1"/>
</dbReference>
<dbReference type="NCBIfam" id="TIGR02618">
    <property type="entry name" value="tyr_phenol_ly"/>
    <property type="match status" value="1"/>
</dbReference>
<dbReference type="PANTHER" id="PTHR32325">
    <property type="entry name" value="BETA-ELIMINATING LYASE-LIKE PROTEIN-RELATED"/>
    <property type="match status" value="1"/>
</dbReference>
<dbReference type="PANTHER" id="PTHR32325:SF4">
    <property type="entry name" value="TRYPTOPHANASE"/>
    <property type="match status" value="1"/>
</dbReference>
<dbReference type="Pfam" id="PF01212">
    <property type="entry name" value="Beta_elim_lyase"/>
    <property type="match status" value="1"/>
</dbReference>
<dbReference type="PIRSF" id="PIRSF001386">
    <property type="entry name" value="Trpase"/>
    <property type="match status" value="1"/>
</dbReference>
<dbReference type="SUPFAM" id="SSF53383">
    <property type="entry name" value="PLP-dependent transferases"/>
    <property type="match status" value="1"/>
</dbReference>
<dbReference type="PROSITE" id="PS00853">
    <property type="entry name" value="BETA_ELIM_LYASE"/>
    <property type="match status" value="1"/>
</dbReference>
<proteinExistence type="evidence at protein level"/>
<comment type="catalytic activity">
    <reaction>
        <text>L-tyrosine + H2O = phenol + pyruvate + NH4(+)</text>
        <dbReference type="Rhea" id="RHEA:21704"/>
        <dbReference type="ChEBI" id="CHEBI:15361"/>
        <dbReference type="ChEBI" id="CHEBI:15377"/>
        <dbReference type="ChEBI" id="CHEBI:15882"/>
        <dbReference type="ChEBI" id="CHEBI:28938"/>
        <dbReference type="ChEBI" id="CHEBI:58315"/>
        <dbReference type="EC" id="4.1.99.2"/>
    </reaction>
</comment>
<comment type="cofactor">
    <cofactor>
        <name>pyridoxal 5'-phosphate</name>
        <dbReference type="ChEBI" id="CHEBI:597326"/>
    </cofactor>
</comment>
<comment type="subunit">
    <text>Homotetramer.</text>
</comment>
<comment type="similarity">
    <text evidence="1">Belongs to the beta-eliminating lyase family.</text>
</comment>
<name>TPL_CITFR</name>
<reference key="1">
    <citation type="journal article" date="1991" name="J. Ferment. Bioeng.">
        <title>Structure of tyrosine phenol-lyase genes from Citrobacter freundii and structural comparison with tryptophanase from Escherichia coli.</title>
        <authorList>
            <person name="Iwamori S."/>
            <person name="Yoshino S."/>
            <person name="Ishiwata K."/>
            <person name="Makiguchi N."/>
        </authorList>
    </citation>
    <scope>NUCLEOTIDE SEQUENCE [GENOMIC DNA]</scope>
    <source>
        <strain>ATCC 8090 / DSM 30039 / JCM 1657 / LMG 3246 / NCTC 9750</strain>
    </source>
</reference>
<reference key="2">
    <citation type="journal article" date="1993" name="Biochemistry">
        <title>Three-dimensional structure of tyrosine phenol-lyase.</title>
        <authorList>
            <person name="Antson A.A."/>
            <person name="Demidkina T.V."/>
            <person name="Gollnick P."/>
            <person name="Dauter Z."/>
            <person name="Vontersch R."/>
            <person name="Long J."/>
            <person name="Berezhnoy S.N."/>
            <person name="Phillips R.S."/>
            <person name="Harutyunyan D."/>
            <person name="Wilson K.S."/>
        </authorList>
    </citation>
    <scope>NUCLEOTIDE SEQUENCE [GENOMIC DNA]</scope>
    <scope>PROTEIN SEQUENCE OF 254-269; 275-299 AND 303-310</scope>
    <scope>X-RAY CRYSTALLOGRAPHY (2.3 ANGSTROMS)</scope>
    <scope>PYRIDOXAL PHOSPHATE AT LYS-257</scope>
</reference>
<reference key="3">
    <citation type="journal article" date="1992" name="FEBS Lett.">
        <title>The polypeptide chain fold in tyrosine phenol-lyase, a pyridoxal-5'-phosphate-dependent enzyme.</title>
        <authorList>
            <person name="Antson A.A."/>
            <person name="Strokopytov B.V."/>
            <person name="Murshudov G.N."/>
            <person name="Isupov M.N."/>
            <person name="Harutyunyan E.H."/>
            <person name="Demidkina T.V."/>
            <person name="Vassylyev D.G."/>
            <person name="Dauter Z."/>
            <person name="Terry H."/>
            <person name="Wilson K.S."/>
        </authorList>
    </citation>
    <scope>X-RAY CRYSTALLOGRAPHY (2.7 ANGSTROMS)</scope>
</reference>
<reference key="4">
    <citation type="journal article" date="1997" name="Biochemistry">
        <title>The crystal structure of Citrobacter freundii tyrosine phenol-lyase complexed with 3-(4'-hydroxyphenyl)propionic acid, together with site-directed mutagenesis and kinetic analysis, demonstrates that arginine 381 is required for substrate specificity.</title>
        <authorList>
            <person name="Sundararaju B."/>
            <person name="Antson A.A."/>
            <person name="Phillips R.S."/>
            <person name="Demidkina T.V."/>
            <person name="Barbolina M.V."/>
            <person name="Gollnick P."/>
            <person name="Dodson G.G."/>
            <person name="Wilson K.S."/>
        </authorList>
    </citation>
    <scope>X-RAY CRYSTALLOGRAPHY (2.5 ANGSTROMS)</scope>
</reference>
<protein>
    <recommendedName>
        <fullName>Tyrosine phenol-lyase</fullName>
        <ecNumber>4.1.99.2</ecNumber>
    </recommendedName>
    <alternativeName>
        <fullName>Beta-tyrosinase</fullName>
    </alternativeName>
</protein>
<sequence length="456" mass="51500">MNYPAEPFRIKSVETVSMIPRDERLKKMQEAGYNTFLLNSKDIYIDLLTDSGTNAMSDKQWAGMMMGDEAYAGSENFYHLERTVQELFGFKHIVPTHQGRGAENLLSQLAIKPGQYVAGNMYFTTTRYHQEKNGAVFVDIVRDEAHDAGLNIAFKGDIDLKKLQKLIDEKGAENIAYICLAVTVNLAGGQPVSMANMRAVRELTEAHGIKVFYDATRCVENAYFIKEQEQGFENKSIAEIVHEMFSYADGCTMSGKKDCLVNIGGFLCMNDDEMFSSAKELVVVYEGMPSYGGLAGRDMEAMAIGLREAMQYEYIEHRVKQVRYLGDKLKAAGVPIVEPVGGHAVFLDARRFCEHLTQDEFPAQSLAASIYVETGVRSMERGIISAGRNNVTGEHHRPKLETVRLTIPRRVYTYAHMDVVADGIIKLYQHKEDIRGLKFIYEPKQLRFFTARFDYI</sequence>
<keyword id="KW-0002">3D-structure</keyword>
<keyword id="KW-0903">Direct protein sequencing</keyword>
<keyword id="KW-0456">Lyase</keyword>
<keyword id="KW-0663">Pyridoxal phosphate</keyword>
<accession>P31013</accession>
<organism>
    <name type="scientific">Citrobacter freundii</name>
    <dbReference type="NCBI Taxonomy" id="546"/>
    <lineage>
        <taxon>Bacteria</taxon>
        <taxon>Pseudomonadati</taxon>
        <taxon>Pseudomonadota</taxon>
        <taxon>Gammaproteobacteria</taxon>
        <taxon>Enterobacterales</taxon>
        <taxon>Enterobacteriaceae</taxon>
        <taxon>Citrobacter</taxon>
        <taxon>Citrobacter freundii complex</taxon>
    </lineage>
</organism>